<evidence type="ECO:0000250" key="1">
    <source>
        <dbReference type="UniProtKB" id="P16714"/>
    </source>
</evidence>
<evidence type="ECO:0000305" key="2"/>
<comment type="function">
    <text evidence="1">DNA-binding protein which binds to the hairpin form of the viral telomeric sequence. Required for the production of mature virions (MV).</text>
</comment>
<comment type="subcellular location">
    <subcellularLocation>
        <location evidence="1">Virion</location>
    </subcellularLocation>
    <text evidence="1">Present in the virus core.</text>
</comment>
<comment type="induction">
    <text>Expressed in the late phase of the viral replicative cycle.</text>
</comment>
<comment type="miscellaneous">
    <text evidence="1">Each virion contains approximately 670 molecules of OPG077.</text>
</comment>
<comment type="similarity">
    <text evidence="2">Belongs to the orthopoxvirus OPG077 family.</text>
</comment>
<organism>
    <name type="scientific">Variola virus (isolate Human/India/Ind3/1967)</name>
    <name type="common">VARV</name>
    <name type="synonym">Smallpox virus</name>
    <dbReference type="NCBI Taxonomy" id="587200"/>
    <lineage>
        <taxon>Viruses</taxon>
        <taxon>Varidnaviria</taxon>
        <taxon>Bamfordvirae</taxon>
        <taxon>Nucleocytoviricota</taxon>
        <taxon>Pokkesviricetes</taxon>
        <taxon>Chitovirales</taxon>
        <taxon>Poxviridae</taxon>
        <taxon>Chordopoxvirinae</taxon>
        <taxon>Orthopoxvirus</taxon>
        <taxon>Variola virus</taxon>
    </lineage>
</organism>
<organismHost>
    <name type="scientific">Homo sapiens</name>
    <name type="common">Human</name>
    <dbReference type="NCBI Taxonomy" id="9606"/>
</organismHost>
<dbReference type="EMBL" id="X67119">
    <property type="protein sequence ID" value="CAA47555.1"/>
    <property type="molecule type" value="Genomic_DNA"/>
</dbReference>
<dbReference type="EMBL" id="X69198">
    <property type="protein sequence ID" value="CAA48996.1"/>
    <property type="molecule type" value="Genomic_DNA"/>
</dbReference>
<dbReference type="PIR" id="S33070">
    <property type="entry name" value="S33070"/>
</dbReference>
<dbReference type="SMR" id="P32999"/>
<dbReference type="KEGG" id="vg:1486456"/>
<dbReference type="Proteomes" id="UP000002060">
    <property type="component" value="Segment"/>
</dbReference>
<dbReference type="GO" id="GO:0044423">
    <property type="term" value="C:virion component"/>
    <property type="evidence" value="ECO:0007669"/>
    <property type="project" value="UniProtKB-KW"/>
</dbReference>
<dbReference type="GO" id="GO:0003677">
    <property type="term" value="F:DNA binding"/>
    <property type="evidence" value="ECO:0007669"/>
    <property type="project" value="UniProtKB-KW"/>
</dbReference>
<dbReference type="InterPro" id="IPR004969">
    <property type="entry name" value="Poxvirus_I1"/>
</dbReference>
<dbReference type="Pfam" id="PF03289">
    <property type="entry name" value="Pox_I1"/>
    <property type="match status" value="1"/>
</dbReference>
<dbReference type="PIRSF" id="PIRSF015625">
    <property type="entry name" value="VAC_I1L"/>
    <property type="match status" value="1"/>
</dbReference>
<sequence>MVEFEDQLVFNSISARALKAYFTAKINEMVDELVTRKCPQKKKSQAKKPEVRIPVDLVKSSFVKKFGLCNYGGILISLINSLVENNFFTKNGKLDDTGKKELVLTDVEKRILNTVDKSSPLYIDISDVKVLAARLKRSATQFNFNGHTYHLENDKIEDLINQLVKDESIQLDEKSSIKDSMYVIPDELIDVLKTRSFRSPQVKDNIISSTRLYDYFTRVTKRDESSIYVILKDPRIASILSLETVEMGAFMYTKHSMLTNAISSEVDRYSEKFQESFYEDIAEFVEENERVDVSRVVECLTVPNITISSNAE</sequence>
<proteinExistence type="evidence at transcript level"/>
<protein>
    <recommendedName>
        <fullName>Telomere-binding protein OPG077</fullName>
    </recommendedName>
    <alternativeName>
        <fullName>Telomere-binding protein I1</fullName>
    </alternativeName>
</protein>
<feature type="chain" id="PRO_0000099562" description="Telomere-binding protein OPG077">
    <location>
        <begin position="1"/>
        <end position="312"/>
    </location>
</feature>
<name>PG077_VAR67</name>
<keyword id="KW-0238">DNA-binding</keyword>
<keyword id="KW-1185">Reference proteome</keyword>
<keyword id="KW-0946">Virion</keyword>
<gene>
    <name type="primary">OPG077</name>
    <name type="ORF">I1L</name>
</gene>
<accession>P32999</accession>
<reference key="1">
    <citation type="journal article" date="1993" name="Virus Res.">
        <title>Analysis of the nucleotide sequence of a 43 kbp segment of the genome of variola virus India-1967 strain.</title>
        <authorList>
            <person name="Shchelkunov S.N."/>
            <person name="Blinov V.M."/>
            <person name="Resenchuk S.M."/>
            <person name="Totmenin A.V."/>
            <person name="Sandakhchiev L.S."/>
        </authorList>
    </citation>
    <scope>NUCLEOTIDE SEQUENCE [GENOMIC DNA]</scope>
</reference>
<reference key="2">
    <citation type="journal article" date="1993" name="Virus Res.">
        <title>Nucleotide sequence analysis of variola virus HindIII M, L, I genome fragments.</title>
        <authorList>
            <person name="Shchelkunov S.N."/>
            <person name="Blinov V.M."/>
            <person name="Totmenin A.V."/>
            <person name="Marennikova S.S."/>
            <person name="Kolykhalov A.A."/>
            <person name="Frolov I.V."/>
            <person name="Chizhikov V.E."/>
            <person name="Gytorov V.V."/>
            <person name="Gashikov P.V."/>
            <person name="Belanov E.F."/>
            <person name="Belavin P.A."/>
            <person name="Resenchuk S.M."/>
            <person name="Andzhaparidze O.G."/>
            <person name="Sandakhchiev L.S."/>
        </authorList>
    </citation>
    <scope>NUCLEOTIDE SEQUENCE [GENOMIC DNA]</scope>
</reference>
<reference key="3">
    <citation type="journal article" date="1993" name="FEBS Lett.">
        <title>Genes of variola and vaccinia viruses necessary to overcome the host protective mechanisms.</title>
        <authorList>
            <person name="Shchelkunov S.N."/>
            <person name="Blinov V.M."/>
            <person name="Sandakhchiev L.S."/>
        </authorList>
    </citation>
    <scope>NUCLEOTIDE SEQUENCE [LARGE SCALE GENOMIC DNA]</scope>
</reference>